<accession>Q9JW56</accession>
<accession>A1IPZ0</accession>
<comment type="function">
    <text evidence="1">Catalyzes the condensation reaction of fatty acid synthesis by the addition to an acyl acceptor of two carbons from malonyl-ACP. Catalyzes the first condensation reaction which initiates fatty acid synthesis and may therefore play a role in governing the total rate of fatty acid production. Possesses both acetoacetyl-ACP synthase and acetyl transacylase activities. Its substrate specificity determines the biosynthesis of branched-chain and/or straight-chain of fatty acids.</text>
</comment>
<comment type="catalytic activity">
    <reaction evidence="1">
        <text>malonyl-[ACP] + acetyl-CoA + H(+) = 3-oxobutanoyl-[ACP] + CO2 + CoA</text>
        <dbReference type="Rhea" id="RHEA:12080"/>
        <dbReference type="Rhea" id="RHEA-COMP:9623"/>
        <dbReference type="Rhea" id="RHEA-COMP:9625"/>
        <dbReference type="ChEBI" id="CHEBI:15378"/>
        <dbReference type="ChEBI" id="CHEBI:16526"/>
        <dbReference type="ChEBI" id="CHEBI:57287"/>
        <dbReference type="ChEBI" id="CHEBI:57288"/>
        <dbReference type="ChEBI" id="CHEBI:78449"/>
        <dbReference type="ChEBI" id="CHEBI:78450"/>
        <dbReference type="EC" id="2.3.1.180"/>
    </reaction>
</comment>
<comment type="pathway">
    <text evidence="1">Lipid metabolism; fatty acid biosynthesis.</text>
</comment>
<comment type="subunit">
    <text evidence="1">Homodimer.</text>
</comment>
<comment type="subcellular location">
    <subcellularLocation>
        <location evidence="1">Cytoplasm</location>
    </subcellularLocation>
</comment>
<comment type="domain">
    <text evidence="1">The last Arg residue of the ACP-binding site is essential for the weak association between ACP/AcpP and FabH.</text>
</comment>
<comment type="similarity">
    <text evidence="1">Belongs to the thiolase-like superfamily. FabH family.</text>
</comment>
<sequence>MQYAKISGTGSYLPANRVSNDDLAQKVDTSDEWITARTGIKFRHIAAENEKTSDLAAEAARRALDAAGLNGNEIDLIIVATATPDMQFPSTATIVQQKLGITNGCPAFDVQAVCAGFMYALTTANAYIKSGMAKNALVIGAETFSRIVDWNDRTTCVLFGDGAGAVVLSASDTPGIIHSKLKADGNYLKLLNVPGQIACGKVSGSPYISMDGPGVFKFAVKMLSKIADDVIEEAGYTAAQIDWIVPHQANRRIIESTAKHLGLSMDKVVLTVQDHGNTSAASIPLALDTGIRSGQIKRGQNLLLEGIGGGFAWGAVLLQY</sequence>
<organism>
    <name type="scientific">Neisseria meningitidis serogroup A / serotype 4A (strain DSM 15465 / Z2491)</name>
    <dbReference type="NCBI Taxonomy" id="122587"/>
    <lineage>
        <taxon>Bacteria</taxon>
        <taxon>Pseudomonadati</taxon>
        <taxon>Pseudomonadota</taxon>
        <taxon>Betaproteobacteria</taxon>
        <taxon>Neisseriales</taxon>
        <taxon>Neisseriaceae</taxon>
        <taxon>Neisseria</taxon>
    </lineage>
</organism>
<gene>
    <name evidence="1" type="primary">fabH</name>
    <name type="ordered locus">NMA0538</name>
</gene>
<dbReference type="EC" id="2.3.1.180" evidence="1"/>
<dbReference type="EMBL" id="AL157959">
    <property type="protein sequence ID" value="CAM07815.1"/>
    <property type="molecule type" value="Genomic_DNA"/>
</dbReference>
<dbReference type="PIR" id="C81972">
    <property type="entry name" value="C81972"/>
</dbReference>
<dbReference type="RefSeq" id="WP_002237129.1">
    <property type="nucleotide sequence ID" value="NC_003116.1"/>
</dbReference>
<dbReference type="SMR" id="Q9JW56"/>
<dbReference type="EnsemblBacteria" id="CAM07815">
    <property type="protein sequence ID" value="CAM07815"/>
    <property type="gene ID" value="NMA0538"/>
</dbReference>
<dbReference type="KEGG" id="nma:NMA0538"/>
<dbReference type="HOGENOM" id="CLU_039592_4_1_4"/>
<dbReference type="UniPathway" id="UPA00094"/>
<dbReference type="Proteomes" id="UP000000626">
    <property type="component" value="Chromosome"/>
</dbReference>
<dbReference type="GO" id="GO:0005737">
    <property type="term" value="C:cytoplasm"/>
    <property type="evidence" value="ECO:0007669"/>
    <property type="project" value="UniProtKB-SubCell"/>
</dbReference>
<dbReference type="GO" id="GO:0004315">
    <property type="term" value="F:3-oxoacyl-[acyl-carrier-protein] synthase activity"/>
    <property type="evidence" value="ECO:0007669"/>
    <property type="project" value="InterPro"/>
</dbReference>
<dbReference type="GO" id="GO:0033818">
    <property type="term" value="F:beta-ketoacyl-acyl-carrier-protein synthase III activity"/>
    <property type="evidence" value="ECO:0007669"/>
    <property type="project" value="UniProtKB-UniRule"/>
</dbReference>
<dbReference type="GO" id="GO:0006633">
    <property type="term" value="P:fatty acid biosynthetic process"/>
    <property type="evidence" value="ECO:0007669"/>
    <property type="project" value="UniProtKB-UniRule"/>
</dbReference>
<dbReference type="CDD" id="cd00830">
    <property type="entry name" value="KAS_III"/>
    <property type="match status" value="1"/>
</dbReference>
<dbReference type="FunFam" id="3.40.47.10:FF:000004">
    <property type="entry name" value="3-oxoacyl-[acyl-carrier-protein] synthase 3"/>
    <property type="match status" value="1"/>
</dbReference>
<dbReference type="Gene3D" id="3.40.47.10">
    <property type="match status" value="1"/>
</dbReference>
<dbReference type="HAMAP" id="MF_01815">
    <property type="entry name" value="FabH"/>
    <property type="match status" value="1"/>
</dbReference>
<dbReference type="InterPro" id="IPR013747">
    <property type="entry name" value="ACP_syn_III_C"/>
</dbReference>
<dbReference type="InterPro" id="IPR013751">
    <property type="entry name" value="ACP_syn_III_N"/>
</dbReference>
<dbReference type="InterPro" id="IPR004655">
    <property type="entry name" value="FabH"/>
</dbReference>
<dbReference type="InterPro" id="IPR016039">
    <property type="entry name" value="Thiolase-like"/>
</dbReference>
<dbReference type="NCBIfam" id="TIGR00747">
    <property type="entry name" value="fabH"/>
    <property type="match status" value="1"/>
</dbReference>
<dbReference type="NCBIfam" id="NF006829">
    <property type="entry name" value="PRK09352.1"/>
    <property type="match status" value="1"/>
</dbReference>
<dbReference type="PANTHER" id="PTHR43091">
    <property type="entry name" value="3-OXOACYL-[ACYL-CARRIER-PROTEIN] SYNTHASE"/>
    <property type="match status" value="1"/>
</dbReference>
<dbReference type="PANTHER" id="PTHR43091:SF1">
    <property type="entry name" value="BETA-KETOACYL-[ACYL-CARRIER-PROTEIN] SYNTHASE III, CHLOROPLASTIC"/>
    <property type="match status" value="1"/>
</dbReference>
<dbReference type="Pfam" id="PF08545">
    <property type="entry name" value="ACP_syn_III"/>
    <property type="match status" value="1"/>
</dbReference>
<dbReference type="Pfam" id="PF08541">
    <property type="entry name" value="ACP_syn_III_C"/>
    <property type="match status" value="1"/>
</dbReference>
<dbReference type="SUPFAM" id="SSF53901">
    <property type="entry name" value="Thiolase-like"/>
    <property type="match status" value="1"/>
</dbReference>
<reference key="1">
    <citation type="journal article" date="2000" name="Nature">
        <title>Complete DNA sequence of a serogroup A strain of Neisseria meningitidis Z2491.</title>
        <authorList>
            <person name="Parkhill J."/>
            <person name="Achtman M."/>
            <person name="James K.D."/>
            <person name="Bentley S.D."/>
            <person name="Churcher C.M."/>
            <person name="Klee S.R."/>
            <person name="Morelli G."/>
            <person name="Basham D."/>
            <person name="Brown D."/>
            <person name="Chillingworth T."/>
            <person name="Davies R.M."/>
            <person name="Davis P."/>
            <person name="Devlin K."/>
            <person name="Feltwell T."/>
            <person name="Hamlin N."/>
            <person name="Holroyd S."/>
            <person name="Jagels K."/>
            <person name="Leather S."/>
            <person name="Moule S."/>
            <person name="Mungall K.L."/>
            <person name="Quail M.A."/>
            <person name="Rajandream M.A."/>
            <person name="Rutherford K.M."/>
            <person name="Simmonds M."/>
            <person name="Skelton J."/>
            <person name="Whitehead S."/>
            <person name="Spratt B.G."/>
            <person name="Barrell B.G."/>
        </authorList>
    </citation>
    <scope>NUCLEOTIDE SEQUENCE [LARGE SCALE GENOMIC DNA]</scope>
    <source>
        <strain>DSM 15465 / Z2491</strain>
    </source>
</reference>
<proteinExistence type="inferred from homology"/>
<protein>
    <recommendedName>
        <fullName evidence="1">Beta-ketoacyl-[acyl-carrier-protein] synthase III</fullName>
        <shortName evidence="1">Beta-ketoacyl-ACP synthase III</shortName>
        <shortName evidence="1">KAS III</shortName>
        <ecNumber evidence="1">2.3.1.180</ecNumber>
    </recommendedName>
    <alternativeName>
        <fullName evidence="1">3-oxoacyl-[acyl-carrier-protein] synthase 3</fullName>
    </alternativeName>
    <alternativeName>
        <fullName evidence="1">3-oxoacyl-[acyl-carrier-protein] synthase III</fullName>
    </alternativeName>
</protein>
<keyword id="KW-0012">Acyltransferase</keyword>
<keyword id="KW-0963">Cytoplasm</keyword>
<keyword id="KW-0275">Fatty acid biosynthesis</keyword>
<keyword id="KW-0276">Fatty acid metabolism</keyword>
<keyword id="KW-0444">Lipid biosynthesis</keyword>
<keyword id="KW-0443">Lipid metabolism</keyword>
<keyword id="KW-0511">Multifunctional enzyme</keyword>
<keyword id="KW-0808">Transferase</keyword>
<evidence type="ECO:0000255" key="1">
    <source>
        <dbReference type="HAMAP-Rule" id="MF_01815"/>
    </source>
</evidence>
<feature type="chain" id="PRO_0000110445" description="Beta-ketoacyl-[acyl-carrier-protein] synthase III">
    <location>
        <begin position="1"/>
        <end position="320"/>
    </location>
</feature>
<feature type="region of interest" description="ACP-binding" evidence="1">
    <location>
        <begin position="248"/>
        <end position="252"/>
    </location>
</feature>
<feature type="active site" evidence="1">
    <location>
        <position position="114"/>
    </location>
</feature>
<feature type="active site" evidence="1">
    <location>
        <position position="247"/>
    </location>
</feature>
<feature type="active site" evidence="1">
    <location>
        <position position="277"/>
    </location>
</feature>
<name>FABH_NEIMA</name>